<reference key="1">
    <citation type="journal article" date="2003" name="Proc. Natl. Acad. Sci. U.S.A.">
        <title>Complete genome sequence of the Q-fever pathogen, Coxiella burnetii.</title>
        <authorList>
            <person name="Seshadri R."/>
            <person name="Paulsen I.T."/>
            <person name="Eisen J.A."/>
            <person name="Read T.D."/>
            <person name="Nelson K.E."/>
            <person name="Nelson W.C."/>
            <person name="Ward N.L."/>
            <person name="Tettelin H."/>
            <person name="Davidsen T.M."/>
            <person name="Beanan M.J."/>
            <person name="DeBoy R.T."/>
            <person name="Daugherty S.C."/>
            <person name="Brinkac L.M."/>
            <person name="Madupu R."/>
            <person name="Dodson R.J."/>
            <person name="Khouri H.M."/>
            <person name="Lee K.H."/>
            <person name="Carty H.A."/>
            <person name="Scanlan D."/>
            <person name="Heinzen R.A."/>
            <person name="Thompson H.A."/>
            <person name="Samuel J.E."/>
            <person name="Fraser C.M."/>
            <person name="Heidelberg J.F."/>
        </authorList>
    </citation>
    <scope>NUCLEOTIDE SEQUENCE [LARGE SCALE GENOMIC DNA]</scope>
    <source>
        <strain>RSA 493 / Nine Mile phase I</strain>
    </source>
</reference>
<keyword id="KW-0963">Cytoplasm</keyword>
<keyword id="KW-0269">Exonuclease</keyword>
<keyword id="KW-0378">Hydrolase</keyword>
<keyword id="KW-0540">Nuclease</keyword>
<keyword id="KW-1185">Reference proteome</keyword>
<protein>
    <recommendedName>
        <fullName evidence="1">Exodeoxyribonuclease 7 small subunit</fullName>
        <ecNumber evidence="1">3.1.11.6</ecNumber>
    </recommendedName>
    <alternativeName>
        <fullName evidence="1">Exodeoxyribonuclease VII small subunit</fullName>
        <shortName evidence="1">Exonuclease VII small subunit</shortName>
    </alternativeName>
</protein>
<name>EX7S_COXBU</name>
<comment type="function">
    <text evidence="1">Bidirectionally degrades single-stranded DNA into large acid-insoluble oligonucleotides, which are then degraded further into small acid-soluble oligonucleotides.</text>
</comment>
<comment type="catalytic activity">
    <reaction evidence="1">
        <text>Exonucleolytic cleavage in either 5'- to 3'- or 3'- to 5'-direction to yield nucleoside 5'-phosphates.</text>
        <dbReference type="EC" id="3.1.11.6"/>
    </reaction>
</comment>
<comment type="subunit">
    <text evidence="1">Heterooligomer composed of large and small subunits.</text>
</comment>
<comment type="subcellular location">
    <subcellularLocation>
        <location evidence="1">Cytoplasm</location>
    </subcellularLocation>
</comment>
<comment type="similarity">
    <text evidence="1">Belongs to the XseB family.</text>
</comment>
<accession>Q83E63</accession>
<dbReference type="EC" id="3.1.11.6" evidence="1"/>
<dbReference type="EMBL" id="AE016828">
    <property type="protein sequence ID" value="AAO90017.1"/>
    <property type="molecule type" value="Genomic_DNA"/>
</dbReference>
<dbReference type="RefSeq" id="NP_819503.1">
    <property type="nucleotide sequence ID" value="NC_002971.4"/>
</dbReference>
<dbReference type="RefSeq" id="WP_005771337.1">
    <property type="nucleotide sequence ID" value="NZ_CDBG01000001.1"/>
</dbReference>
<dbReference type="SMR" id="Q83E63"/>
<dbReference type="STRING" id="227377.CBU_0468"/>
<dbReference type="EnsemblBacteria" id="AAO90017">
    <property type="protein sequence ID" value="AAO90017"/>
    <property type="gene ID" value="CBU_0468"/>
</dbReference>
<dbReference type="GeneID" id="1208352"/>
<dbReference type="KEGG" id="cbu:CBU_0468"/>
<dbReference type="PATRIC" id="fig|227377.7.peg.458"/>
<dbReference type="eggNOG" id="COG1722">
    <property type="taxonomic scope" value="Bacteria"/>
</dbReference>
<dbReference type="HOGENOM" id="CLU_145918_3_3_6"/>
<dbReference type="OrthoDB" id="9801128at2"/>
<dbReference type="Proteomes" id="UP000002671">
    <property type="component" value="Chromosome"/>
</dbReference>
<dbReference type="GO" id="GO:0005829">
    <property type="term" value="C:cytosol"/>
    <property type="evidence" value="ECO:0000318"/>
    <property type="project" value="GO_Central"/>
</dbReference>
<dbReference type="GO" id="GO:0009318">
    <property type="term" value="C:exodeoxyribonuclease VII complex"/>
    <property type="evidence" value="ECO:0007669"/>
    <property type="project" value="InterPro"/>
</dbReference>
<dbReference type="GO" id="GO:0008855">
    <property type="term" value="F:exodeoxyribonuclease VII activity"/>
    <property type="evidence" value="ECO:0000318"/>
    <property type="project" value="GO_Central"/>
</dbReference>
<dbReference type="GO" id="GO:0006308">
    <property type="term" value="P:DNA catabolic process"/>
    <property type="evidence" value="ECO:0007669"/>
    <property type="project" value="UniProtKB-UniRule"/>
</dbReference>
<dbReference type="Gene3D" id="1.10.287.1040">
    <property type="entry name" value="Exonuclease VII, small subunit"/>
    <property type="match status" value="1"/>
</dbReference>
<dbReference type="HAMAP" id="MF_00337">
    <property type="entry name" value="Exonuc_7_S"/>
    <property type="match status" value="1"/>
</dbReference>
<dbReference type="InterPro" id="IPR003761">
    <property type="entry name" value="Exonuc_VII_S"/>
</dbReference>
<dbReference type="InterPro" id="IPR037004">
    <property type="entry name" value="Exonuc_VII_ssu_sf"/>
</dbReference>
<dbReference type="NCBIfam" id="NF002140">
    <property type="entry name" value="PRK00977.1-4"/>
    <property type="match status" value="1"/>
</dbReference>
<dbReference type="NCBIfam" id="TIGR01280">
    <property type="entry name" value="xseB"/>
    <property type="match status" value="1"/>
</dbReference>
<dbReference type="PANTHER" id="PTHR34137">
    <property type="entry name" value="EXODEOXYRIBONUCLEASE 7 SMALL SUBUNIT"/>
    <property type="match status" value="1"/>
</dbReference>
<dbReference type="PANTHER" id="PTHR34137:SF1">
    <property type="entry name" value="EXODEOXYRIBONUCLEASE 7 SMALL SUBUNIT"/>
    <property type="match status" value="1"/>
</dbReference>
<dbReference type="Pfam" id="PF02609">
    <property type="entry name" value="Exonuc_VII_S"/>
    <property type="match status" value="1"/>
</dbReference>
<dbReference type="PIRSF" id="PIRSF006488">
    <property type="entry name" value="Exonuc_VII_S"/>
    <property type="match status" value="1"/>
</dbReference>
<dbReference type="SUPFAM" id="SSF116842">
    <property type="entry name" value="XseB-like"/>
    <property type="match status" value="1"/>
</dbReference>
<organism>
    <name type="scientific">Coxiella burnetii (strain RSA 493 / Nine Mile phase I)</name>
    <dbReference type="NCBI Taxonomy" id="227377"/>
    <lineage>
        <taxon>Bacteria</taxon>
        <taxon>Pseudomonadati</taxon>
        <taxon>Pseudomonadota</taxon>
        <taxon>Gammaproteobacteria</taxon>
        <taxon>Legionellales</taxon>
        <taxon>Coxiellaceae</taxon>
        <taxon>Coxiella</taxon>
    </lineage>
</organism>
<feature type="chain" id="PRO_0000206942" description="Exodeoxyribonuclease 7 small subunit">
    <location>
        <begin position="1"/>
        <end position="82"/>
    </location>
</feature>
<proteinExistence type="inferred from homology"/>
<gene>
    <name evidence="1" type="primary">xseB</name>
    <name type="ordered locus">CBU_0468</name>
</gene>
<sequence>MPRKKTENFNFEASLNELTALVEKLEQGDLTLEESLQNFERGVGLVRSCQQALSDAEQKVKVLINQDGAETLVPFELETKTD</sequence>
<evidence type="ECO:0000255" key="1">
    <source>
        <dbReference type="HAMAP-Rule" id="MF_00337"/>
    </source>
</evidence>